<keyword id="KW-0025">Alternative splicing</keyword>
<keyword id="KW-0175">Coiled coil</keyword>
<keyword id="KW-0597">Phosphoprotein</keyword>
<keyword id="KW-1267">Proteomics identification</keyword>
<keyword id="KW-1185">Reference proteome</keyword>
<name>F117A_HUMAN</name>
<protein>
    <recommendedName>
        <fullName>Protein FAM117A</fullName>
    </recommendedName>
    <alternativeName>
        <fullName>C/EBP-induced protein</fullName>
    </alternativeName>
</protein>
<accession>Q9C073</accession>
<accession>B7Z7Q3</accession>
<organism>
    <name type="scientific">Homo sapiens</name>
    <name type="common">Human</name>
    <dbReference type="NCBI Taxonomy" id="9606"/>
    <lineage>
        <taxon>Eukaryota</taxon>
        <taxon>Metazoa</taxon>
        <taxon>Chordata</taxon>
        <taxon>Craniata</taxon>
        <taxon>Vertebrata</taxon>
        <taxon>Euteleostomi</taxon>
        <taxon>Mammalia</taxon>
        <taxon>Eutheria</taxon>
        <taxon>Euarchontoglires</taxon>
        <taxon>Primates</taxon>
        <taxon>Haplorrhini</taxon>
        <taxon>Catarrhini</taxon>
        <taxon>Hominidae</taxon>
        <taxon>Homo</taxon>
    </lineage>
</organism>
<sequence>MAGAAAGGRGGGAWGPGRGGAGGLRRGCSPPAPAGSPRAGLQPLRATIPFQLQQPHQRRDGGGRAASVPCSVAPEKSVCRPQPLQVRRTFSLDTILSSYLLGQWPRDADGAFTCCTNDKATQTPLSWQELEGERASSCAHKRSASWGSTDHRKEISKLKQQLQRTKLSRSGKEKERGSPLLGDHAVRGALRASPPSFPSGSPVLRLSPCLHRSLEGLNQELEEVFVKEQGEEELLRILDIPDGHRAPAPPQSGSCDHPLLLLEPGNLASSPSMSLASPQPCGLASHEEHRGAAEELASTPNDKASSPGHPAFLEDGSPSPVLAFAASPRPNHSYIFKREPPEGCEKVRVFEEATSPGPDLAFLTSCPDKNKVHFNPTGSAFCPVNLMKPLFPGMGFIFRNCPSNPGSPLPPASPRPPPRKDPEASKASPLPFEPWQRTPPSEEPVLFQSSLMV</sequence>
<reference key="1">
    <citation type="submission" date="1999-01" db="EMBL/GenBank/DDBJ databases">
        <title>A novel C/EBP-regulated gene.</title>
        <authorList>
            <person name="Tian Q."/>
            <person name="Schwartz R.C."/>
        </authorList>
    </citation>
    <scope>NUCLEOTIDE SEQUENCE [MRNA] (ISOFORM 1)</scope>
    <source>
        <tissue>Bone marrow</tissue>
    </source>
</reference>
<reference key="2">
    <citation type="journal article" date="2004" name="Nat. Genet.">
        <title>Complete sequencing and characterization of 21,243 full-length human cDNAs.</title>
        <authorList>
            <person name="Ota T."/>
            <person name="Suzuki Y."/>
            <person name="Nishikawa T."/>
            <person name="Otsuki T."/>
            <person name="Sugiyama T."/>
            <person name="Irie R."/>
            <person name="Wakamatsu A."/>
            <person name="Hayashi K."/>
            <person name="Sato H."/>
            <person name="Nagai K."/>
            <person name="Kimura K."/>
            <person name="Makita H."/>
            <person name="Sekine M."/>
            <person name="Obayashi M."/>
            <person name="Nishi T."/>
            <person name="Shibahara T."/>
            <person name="Tanaka T."/>
            <person name="Ishii S."/>
            <person name="Yamamoto J."/>
            <person name="Saito K."/>
            <person name="Kawai Y."/>
            <person name="Isono Y."/>
            <person name="Nakamura Y."/>
            <person name="Nagahari K."/>
            <person name="Murakami K."/>
            <person name="Yasuda T."/>
            <person name="Iwayanagi T."/>
            <person name="Wagatsuma M."/>
            <person name="Shiratori A."/>
            <person name="Sudo H."/>
            <person name="Hosoiri T."/>
            <person name="Kaku Y."/>
            <person name="Kodaira H."/>
            <person name="Kondo H."/>
            <person name="Sugawara M."/>
            <person name="Takahashi M."/>
            <person name="Kanda K."/>
            <person name="Yokoi T."/>
            <person name="Furuya T."/>
            <person name="Kikkawa E."/>
            <person name="Omura Y."/>
            <person name="Abe K."/>
            <person name="Kamihara K."/>
            <person name="Katsuta N."/>
            <person name="Sato K."/>
            <person name="Tanikawa M."/>
            <person name="Yamazaki M."/>
            <person name="Ninomiya K."/>
            <person name="Ishibashi T."/>
            <person name="Yamashita H."/>
            <person name="Murakawa K."/>
            <person name="Fujimori K."/>
            <person name="Tanai H."/>
            <person name="Kimata M."/>
            <person name="Watanabe M."/>
            <person name="Hiraoka S."/>
            <person name="Chiba Y."/>
            <person name="Ishida S."/>
            <person name="Ono Y."/>
            <person name="Takiguchi S."/>
            <person name="Watanabe S."/>
            <person name="Yosida M."/>
            <person name="Hotuta T."/>
            <person name="Kusano J."/>
            <person name="Kanehori K."/>
            <person name="Takahashi-Fujii A."/>
            <person name="Hara H."/>
            <person name="Tanase T.-O."/>
            <person name="Nomura Y."/>
            <person name="Togiya S."/>
            <person name="Komai F."/>
            <person name="Hara R."/>
            <person name="Takeuchi K."/>
            <person name="Arita M."/>
            <person name="Imose N."/>
            <person name="Musashino K."/>
            <person name="Yuuki H."/>
            <person name="Oshima A."/>
            <person name="Sasaki N."/>
            <person name="Aotsuka S."/>
            <person name="Yoshikawa Y."/>
            <person name="Matsunawa H."/>
            <person name="Ichihara T."/>
            <person name="Shiohata N."/>
            <person name="Sano S."/>
            <person name="Moriya S."/>
            <person name="Momiyama H."/>
            <person name="Satoh N."/>
            <person name="Takami S."/>
            <person name="Terashima Y."/>
            <person name="Suzuki O."/>
            <person name="Nakagawa S."/>
            <person name="Senoh A."/>
            <person name="Mizoguchi H."/>
            <person name="Goto Y."/>
            <person name="Shimizu F."/>
            <person name="Wakebe H."/>
            <person name="Hishigaki H."/>
            <person name="Watanabe T."/>
            <person name="Sugiyama A."/>
            <person name="Takemoto M."/>
            <person name="Kawakami B."/>
            <person name="Yamazaki M."/>
            <person name="Watanabe K."/>
            <person name="Kumagai A."/>
            <person name="Itakura S."/>
            <person name="Fukuzumi Y."/>
            <person name="Fujimori Y."/>
            <person name="Komiyama M."/>
            <person name="Tashiro H."/>
            <person name="Tanigami A."/>
            <person name="Fujiwara T."/>
            <person name="Ono T."/>
            <person name="Yamada K."/>
            <person name="Fujii Y."/>
            <person name="Ozaki K."/>
            <person name="Hirao M."/>
            <person name="Ohmori Y."/>
            <person name="Kawabata A."/>
            <person name="Hikiji T."/>
            <person name="Kobatake N."/>
            <person name="Inagaki H."/>
            <person name="Ikema Y."/>
            <person name="Okamoto S."/>
            <person name="Okitani R."/>
            <person name="Kawakami T."/>
            <person name="Noguchi S."/>
            <person name="Itoh T."/>
            <person name="Shigeta K."/>
            <person name="Senba T."/>
            <person name="Matsumura K."/>
            <person name="Nakajima Y."/>
            <person name="Mizuno T."/>
            <person name="Morinaga M."/>
            <person name="Sasaki M."/>
            <person name="Togashi T."/>
            <person name="Oyama M."/>
            <person name="Hata H."/>
            <person name="Watanabe M."/>
            <person name="Komatsu T."/>
            <person name="Mizushima-Sugano J."/>
            <person name="Satoh T."/>
            <person name="Shirai Y."/>
            <person name="Takahashi Y."/>
            <person name="Nakagawa K."/>
            <person name="Okumura K."/>
            <person name="Nagase T."/>
            <person name="Nomura N."/>
            <person name="Kikuchi H."/>
            <person name="Masuho Y."/>
            <person name="Yamashita R."/>
            <person name="Nakai K."/>
            <person name="Yada T."/>
            <person name="Nakamura Y."/>
            <person name="Ohara O."/>
            <person name="Isogai T."/>
            <person name="Sugano S."/>
        </authorList>
    </citation>
    <scope>NUCLEOTIDE SEQUENCE [LARGE SCALE MRNA] (ISOFORM 2)</scope>
    <source>
        <tissue>Testis</tissue>
    </source>
</reference>
<reference key="3">
    <citation type="journal article" date="2006" name="Nature">
        <title>DNA sequence of human chromosome 17 and analysis of rearrangement in the human lineage.</title>
        <authorList>
            <person name="Zody M.C."/>
            <person name="Garber M."/>
            <person name="Adams D.J."/>
            <person name="Sharpe T."/>
            <person name="Harrow J."/>
            <person name="Lupski J.R."/>
            <person name="Nicholson C."/>
            <person name="Searle S.M."/>
            <person name="Wilming L."/>
            <person name="Young S.K."/>
            <person name="Abouelleil A."/>
            <person name="Allen N.R."/>
            <person name="Bi W."/>
            <person name="Bloom T."/>
            <person name="Borowsky M.L."/>
            <person name="Bugalter B.E."/>
            <person name="Butler J."/>
            <person name="Chang J.L."/>
            <person name="Chen C.-K."/>
            <person name="Cook A."/>
            <person name="Corum B."/>
            <person name="Cuomo C.A."/>
            <person name="de Jong P.J."/>
            <person name="DeCaprio D."/>
            <person name="Dewar K."/>
            <person name="FitzGerald M."/>
            <person name="Gilbert J."/>
            <person name="Gibson R."/>
            <person name="Gnerre S."/>
            <person name="Goldstein S."/>
            <person name="Grafham D.V."/>
            <person name="Grocock R."/>
            <person name="Hafez N."/>
            <person name="Hagopian D.S."/>
            <person name="Hart E."/>
            <person name="Norman C.H."/>
            <person name="Humphray S."/>
            <person name="Jaffe D.B."/>
            <person name="Jones M."/>
            <person name="Kamal M."/>
            <person name="Khodiyar V.K."/>
            <person name="LaButti K."/>
            <person name="Laird G."/>
            <person name="Lehoczky J."/>
            <person name="Liu X."/>
            <person name="Lokyitsang T."/>
            <person name="Loveland J."/>
            <person name="Lui A."/>
            <person name="Macdonald P."/>
            <person name="Major J.E."/>
            <person name="Matthews L."/>
            <person name="Mauceli E."/>
            <person name="McCarroll S.A."/>
            <person name="Mihalev A.H."/>
            <person name="Mudge J."/>
            <person name="Nguyen C."/>
            <person name="Nicol R."/>
            <person name="O'Leary S.B."/>
            <person name="Osoegawa K."/>
            <person name="Schwartz D.C."/>
            <person name="Shaw-Smith C."/>
            <person name="Stankiewicz P."/>
            <person name="Steward C."/>
            <person name="Swarbreck D."/>
            <person name="Venkataraman V."/>
            <person name="Whittaker C.A."/>
            <person name="Yang X."/>
            <person name="Zimmer A.R."/>
            <person name="Bradley A."/>
            <person name="Hubbard T."/>
            <person name="Birren B.W."/>
            <person name="Rogers J."/>
            <person name="Lander E.S."/>
            <person name="Nusbaum C."/>
        </authorList>
    </citation>
    <scope>NUCLEOTIDE SEQUENCE [LARGE SCALE GENOMIC DNA]</scope>
</reference>
<reference key="4">
    <citation type="journal article" date="2004" name="Genome Res.">
        <title>The status, quality, and expansion of the NIH full-length cDNA project: the Mammalian Gene Collection (MGC).</title>
        <authorList>
            <consortium name="The MGC Project Team"/>
        </authorList>
    </citation>
    <scope>NUCLEOTIDE SEQUENCE [LARGE SCALE MRNA] (ISOFORM 1)</scope>
    <source>
        <tissue>Blood</tissue>
        <tissue>Skin</tissue>
    </source>
</reference>
<reference key="5">
    <citation type="journal article" date="2009" name="Sci. Signal.">
        <title>Quantitative phosphoproteomic analysis of T cell receptor signaling reveals system-wide modulation of protein-protein interactions.</title>
        <authorList>
            <person name="Mayya V."/>
            <person name="Lundgren D.H."/>
            <person name="Hwang S.-I."/>
            <person name="Rezaul K."/>
            <person name="Wu L."/>
            <person name="Eng J.K."/>
            <person name="Rodionov V."/>
            <person name="Han D.K."/>
        </authorList>
    </citation>
    <scope>PHOSPHORYLATION [LARGE SCALE ANALYSIS] AT SER-213</scope>
    <scope>IDENTIFICATION BY MASS SPECTROMETRY [LARGE SCALE ANALYSIS]</scope>
    <source>
        <tissue>Leukemic T-cell</tissue>
    </source>
</reference>
<reference key="6">
    <citation type="journal article" date="2011" name="Sci. Signal.">
        <title>System-wide temporal characterization of the proteome and phosphoproteome of human embryonic stem cell differentiation.</title>
        <authorList>
            <person name="Rigbolt K.T."/>
            <person name="Prokhorova T.A."/>
            <person name="Akimov V."/>
            <person name="Henningsen J."/>
            <person name="Johansen P.T."/>
            <person name="Kratchmarova I."/>
            <person name="Kassem M."/>
            <person name="Mann M."/>
            <person name="Olsen J.V."/>
            <person name="Blagoev B."/>
        </authorList>
    </citation>
    <scope>PHOSPHORYLATION [LARGE SCALE ANALYSIS] AT SER-213</scope>
    <scope>IDENTIFICATION BY MASS SPECTROMETRY [LARGE SCALE ANALYSIS]</scope>
</reference>
<reference key="7">
    <citation type="journal article" date="2013" name="J. Proteome Res.">
        <title>Toward a comprehensive characterization of a human cancer cell phosphoproteome.</title>
        <authorList>
            <person name="Zhou H."/>
            <person name="Di Palma S."/>
            <person name="Preisinger C."/>
            <person name="Peng M."/>
            <person name="Polat A.N."/>
            <person name="Heck A.J."/>
            <person name="Mohammed S."/>
        </authorList>
    </citation>
    <scope>PHOSPHORYLATION [LARGE SCALE ANALYSIS] AT SER-29; SER-67; SER-178; SER-193; SER-201; SER-213; THR-299; THR-354 AND SER-428</scope>
    <scope>IDENTIFICATION BY MASS SPECTROMETRY [LARGE SCALE ANALYSIS]</scope>
    <source>
        <tissue>Erythroleukemia</tissue>
    </source>
</reference>
<reference key="8">
    <citation type="journal article" date="2014" name="J. Proteomics">
        <title>An enzyme assisted RP-RPLC approach for in-depth analysis of human liver phosphoproteome.</title>
        <authorList>
            <person name="Bian Y."/>
            <person name="Song C."/>
            <person name="Cheng K."/>
            <person name="Dong M."/>
            <person name="Wang F."/>
            <person name="Huang J."/>
            <person name="Sun D."/>
            <person name="Wang L."/>
            <person name="Ye M."/>
            <person name="Zou H."/>
        </authorList>
    </citation>
    <scope>PHOSPHORYLATION [LARGE SCALE ANALYSIS] AT SER-29; SER-178 AND SER-193</scope>
    <scope>IDENTIFICATION BY MASS SPECTROMETRY [LARGE SCALE ANALYSIS]</scope>
    <source>
        <tissue>Liver</tissue>
    </source>
</reference>
<dbReference type="EMBL" id="AF123073">
    <property type="protein sequence ID" value="AAK01477.1"/>
    <property type="molecule type" value="mRNA"/>
</dbReference>
<dbReference type="EMBL" id="AK302376">
    <property type="protein sequence ID" value="BAH13689.1"/>
    <property type="molecule type" value="mRNA"/>
</dbReference>
<dbReference type="EMBL" id="AC015795">
    <property type="status" value="NOT_ANNOTATED_CDS"/>
    <property type="molecule type" value="Genomic_DNA"/>
</dbReference>
<dbReference type="EMBL" id="BC037572">
    <property type="protein sequence ID" value="AAH37572.1"/>
    <property type="molecule type" value="mRNA"/>
</dbReference>
<dbReference type="EMBL" id="BC065199">
    <property type="protein sequence ID" value="AAH65199.1"/>
    <property type="molecule type" value="mRNA"/>
</dbReference>
<dbReference type="CCDS" id="CCDS11553.1">
    <molecule id="Q9C073-1"/>
</dbReference>
<dbReference type="CCDS" id="CCDS92358.1">
    <molecule id="Q9C073-2"/>
</dbReference>
<dbReference type="RefSeq" id="NP_001398055.1">
    <molecule id="Q9C073-2"/>
    <property type="nucleotide sequence ID" value="NM_001411126.1"/>
</dbReference>
<dbReference type="RefSeq" id="NP_110429.1">
    <molecule id="Q9C073-1"/>
    <property type="nucleotide sequence ID" value="NM_030802.4"/>
</dbReference>
<dbReference type="RefSeq" id="XP_047292814.1">
    <molecule id="Q9C073-2"/>
    <property type="nucleotide sequence ID" value="XM_047436858.1"/>
</dbReference>
<dbReference type="RefSeq" id="XP_054173419.1">
    <molecule id="Q9C073-2"/>
    <property type="nucleotide sequence ID" value="XM_054317444.1"/>
</dbReference>
<dbReference type="BioGRID" id="123522">
    <property type="interactions" value="16"/>
</dbReference>
<dbReference type="FunCoup" id="Q9C073">
    <property type="interactions" value="446"/>
</dbReference>
<dbReference type="IntAct" id="Q9C073">
    <property type="interactions" value="11"/>
</dbReference>
<dbReference type="STRING" id="9606.ENSP00000240364"/>
<dbReference type="GlyGen" id="Q9C073">
    <property type="glycosylation" value="1 site, 1 O-linked glycan (1 site)"/>
</dbReference>
<dbReference type="iPTMnet" id="Q9C073"/>
<dbReference type="PhosphoSitePlus" id="Q9C073"/>
<dbReference type="BioMuta" id="FAM117A"/>
<dbReference type="DMDM" id="74733494"/>
<dbReference type="jPOST" id="Q9C073"/>
<dbReference type="MassIVE" id="Q9C073"/>
<dbReference type="PaxDb" id="9606-ENSP00000240364"/>
<dbReference type="PeptideAtlas" id="Q9C073"/>
<dbReference type="ProteomicsDB" id="79962">
    <molecule id="Q9C073-1"/>
</dbReference>
<dbReference type="Pumba" id="Q9C073"/>
<dbReference type="Antibodypedia" id="17977">
    <property type="antibodies" value="49 antibodies from 16 providers"/>
</dbReference>
<dbReference type="DNASU" id="81558"/>
<dbReference type="Ensembl" id="ENST00000240364.7">
    <molecule id="Q9C073-1"/>
    <property type="protein sequence ID" value="ENSP00000240364.2"/>
    <property type="gene ID" value="ENSG00000121104.8"/>
</dbReference>
<dbReference type="Ensembl" id="ENST00000513602.5">
    <molecule id="Q9C073-2"/>
    <property type="protein sequence ID" value="ENSP00000465808.1"/>
    <property type="gene ID" value="ENSG00000121104.8"/>
</dbReference>
<dbReference type="GeneID" id="81558"/>
<dbReference type="KEGG" id="hsa:81558"/>
<dbReference type="MANE-Select" id="ENST00000240364.7">
    <property type="protein sequence ID" value="ENSP00000240364.2"/>
    <property type="RefSeq nucleotide sequence ID" value="NM_030802.4"/>
    <property type="RefSeq protein sequence ID" value="NP_110429.1"/>
</dbReference>
<dbReference type="UCSC" id="uc002ipk.4">
    <molecule id="Q9C073-1"/>
    <property type="organism name" value="human"/>
</dbReference>
<dbReference type="AGR" id="HGNC:24179"/>
<dbReference type="CTD" id="81558"/>
<dbReference type="DisGeNET" id="81558"/>
<dbReference type="GeneCards" id="FAM117A"/>
<dbReference type="HGNC" id="HGNC:24179">
    <property type="gene designation" value="FAM117A"/>
</dbReference>
<dbReference type="HPA" id="ENSG00000121104">
    <property type="expression patterns" value="Tissue enhanced (bone marrow, choroid plexus)"/>
</dbReference>
<dbReference type="neXtProt" id="NX_Q9C073"/>
<dbReference type="OpenTargets" id="ENSG00000121104"/>
<dbReference type="PharmGKB" id="PA145008393"/>
<dbReference type="VEuPathDB" id="HostDB:ENSG00000121104"/>
<dbReference type="eggNOG" id="ENOG502QW8D">
    <property type="taxonomic scope" value="Eukaryota"/>
</dbReference>
<dbReference type="GeneTree" id="ENSGT00950000183046"/>
<dbReference type="HOGENOM" id="CLU_033432_3_2_1"/>
<dbReference type="InParanoid" id="Q9C073"/>
<dbReference type="OMA" id="QWPRDTD"/>
<dbReference type="OrthoDB" id="10037581at2759"/>
<dbReference type="PAN-GO" id="Q9C073">
    <property type="GO annotations" value="0 GO annotations based on evolutionary models"/>
</dbReference>
<dbReference type="PhylomeDB" id="Q9C073"/>
<dbReference type="TreeFam" id="TF333159"/>
<dbReference type="PathwayCommons" id="Q9C073"/>
<dbReference type="SignaLink" id="Q9C073"/>
<dbReference type="BioGRID-ORCS" id="81558">
    <property type="hits" value="17 hits in 1158 CRISPR screens"/>
</dbReference>
<dbReference type="ChiTaRS" id="FAM117A">
    <property type="organism name" value="human"/>
</dbReference>
<dbReference type="GenomeRNAi" id="81558"/>
<dbReference type="Pharos" id="Q9C073">
    <property type="development level" value="Tdark"/>
</dbReference>
<dbReference type="PRO" id="PR:Q9C073"/>
<dbReference type="Proteomes" id="UP000005640">
    <property type="component" value="Chromosome 17"/>
</dbReference>
<dbReference type="RNAct" id="Q9C073">
    <property type="molecule type" value="protein"/>
</dbReference>
<dbReference type="Bgee" id="ENSG00000121104">
    <property type="expression patterns" value="Expressed in trabecular bone tissue and 179 other cell types or tissues"/>
</dbReference>
<dbReference type="ExpressionAtlas" id="Q9C073">
    <property type="expression patterns" value="baseline and differential"/>
</dbReference>
<dbReference type="InterPro" id="IPR026642">
    <property type="entry name" value="Glcci1/FAM117"/>
</dbReference>
<dbReference type="PANTHER" id="PTHR14972">
    <property type="entry name" value="AGAP011572-PA"/>
    <property type="match status" value="1"/>
</dbReference>
<dbReference type="PANTHER" id="PTHR14972:SF7">
    <property type="entry name" value="PROTEIN FAM117A"/>
    <property type="match status" value="1"/>
</dbReference>
<dbReference type="Pfam" id="PF15388">
    <property type="entry name" value="FAM117"/>
    <property type="match status" value="1"/>
</dbReference>
<feature type="chain" id="PRO_0000264988" description="Protein FAM117A">
    <location>
        <begin position="1"/>
        <end position="453"/>
    </location>
</feature>
<feature type="region of interest" description="Disordered" evidence="3">
    <location>
        <begin position="1"/>
        <end position="45"/>
    </location>
</feature>
<feature type="region of interest" description="Disordered" evidence="3">
    <location>
        <begin position="159"/>
        <end position="201"/>
    </location>
</feature>
<feature type="region of interest" description="Disordered" evidence="3">
    <location>
        <begin position="269"/>
        <end position="320"/>
    </location>
</feature>
<feature type="region of interest" description="Disordered" evidence="3">
    <location>
        <begin position="406"/>
        <end position="453"/>
    </location>
</feature>
<feature type="coiled-coil region" evidence="2">
    <location>
        <begin position="149"/>
        <end position="175"/>
    </location>
</feature>
<feature type="compositionally biased region" description="Gly residues" evidence="3">
    <location>
        <begin position="1"/>
        <end position="25"/>
    </location>
</feature>
<feature type="compositionally biased region" description="Low complexity" evidence="3">
    <location>
        <begin position="269"/>
        <end position="278"/>
    </location>
</feature>
<feature type="compositionally biased region" description="Pro residues" evidence="3">
    <location>
        <begin position="406"/>
        <end position="416"/>
    </location>
</feature>
<feature type="modified residue" description="Phosphoserine" evidence="8 9">
    <location>
        <position position="29"/>
    </location>
</feature>
<feature type="modified residue" description="Phosphoserine" evidence="8">
    <location>
        <position position="67"/>
    </location>
</feature>
<feature type="modified residue" description="Phosphoserine" evidence="8 9">
    <location>
        <position position="178"/>
    </location>
</feature>
<feature type="modified residue" description="Phosphoserine" evidence="8 9">
    <location>
        <position position="193"/>
    </location>
</feature>
<feature type="modified residue" description="Phosphoserine" evidence="8">
    <location>
        <position position="201"/>
    </location>
</feature>
<feature type="modified residue" description="Phosphoserine" evidence="6 7 8">
    <location>
        <position position="213"/>
    </location>
</feature>
<feature type="modified residue" description="Phosphothreonine" evidence="8">
    <location>
        <position position="299"/>
    </location>
</feature>
<feature type="modified residue" description="Phosphoserine" evidence="1">
    <location>
        <position position="319"/>
    </location>
</feature>
<feature type="modified residue" description="Phosphoserine" evidence="1">
    <location>
        <position position="327"/>
    </location>
</feature>
<feature type="modified residue" description="Phosphothreonine" evidence="8">
    <location>
        <position position="354"/>
    </location>
</feature>
<feature type="modified residue" description="Phosphoserine" evidence="1">
    <location>
        <position position="413"/>
    </location>
</feature>
<feature type="modified residue" description="Phosphoserine" evidence="8">
    <location>
        <position position="428"/>
    </location>
</feature>
<feature type="splice variant" id="VSP_056129" description="In isoform 2." evidence="4">
    <location>
        <begin position="1"/>
        <end position="272"/>
    </location>
</feature>
<comment type="alternative products">
    <event type="alternative splicing"/>
    <isoform>
        <id>Q9C073-1</id>
        <name>1</name>
        <sequence type="displayed"/>
    </isoform>
    <isoform>
        <id>Q9C073-2</id>
        <name>2</name>
        <sequence type="described" ref="VSP_056129"/>
    </isoform>
</comment>
<comment type="similarity">
    <text evidence="5">Belongs to the FAM117 family.</text>
</comment>
<evidence type="ECO:0000250" key="1">
    <source>
        <dbReference type="UniProtKB" id="Q7TNF9"/>
    </source>
</evidence>
<evidence type="ECO:0000255" key="2"/>
<evidence type="ECO:0000256" key="3">
    <source>
        <dbReference type="SAM" id="MobiDB-lite"/>
    </source>
</evidence>
<evidence type="ECO:0000303" key="4">
    <source>
    </source>
</evidence>
<evidence type="ECO:0000305" key="5"/>
<evidence type="ECO:0007744" key="6">
    <source>
    </source>
</evidence>
<evidence type="ECO:0007744" key="7">
    <source>
    </source>
</evidence>
<evidence type="ECO:0007744" key="8">
    <source>
    </source>
</evidence>
<evidence type="ECO:0007744" key="9">
    <source>
    </source>
</evidence>
<gene>
    <name type="primary">FAM117A</name>
</gene>
<proteinExistence type="evidence at protein level"/>